<gene>
    <name type="primary">Ptbp1</name>
    <name type="synonym">Ptb</name>
    <name type="synonym">Pybp</name>
    <name type="synonym">Tbfii</name>
</gene>
<dbReference type="EMBL" id="X60789">
    <property type="protein sequence ID" value="CAA43202.1"/>
    <property type="molecule type" value="mRNA"/>
</dbReference>
<dbReference type="EMBL" id="X60790">
    <property type="protein sequence ID" value="CAA43203.1"/>
    <property type="status" value="ALT_FRAME"/>
    <property type="molecule type" value="mRNA"/>
</dbReference>
<dbReference type="EMBL" id="X74565">
    <property type="protein sequence ID" value="CAA52653.1"/>
    <property type="molecule type" value="mRNA"/>
</dbReference>
<dbReference type="EMBL" id="CH474029">
    <property type="protein sequence ID" value="EDL89384.1"/>
    <property type="molecule type" value="Genomic_DNA"/>
</dbReference>
<dbReference type="EMBL" id="BC061858">
    <property type="protein sequence ID" value="AAH61858.1"/>
    <property type="molecule type" value="mRNA"/>
</dbReference>
<dbReference type="PIR" id="S15552">
    <property type="entry name" value="S15552"/>
</dbReference>
<dbReference type="PIR" id="S36629">
    <property type="entry name" value="S36629"/>
</dbReference>
<dbReference type="RefSeq" id="NP_001257986.1">
    <molecule id="Q00438-1"/>
    <property type="nucleotide sequence ID" value="NM_001271057.1"/>
</dbReference>
<dbReference type="RefSeq" id="NP_071961.2">
    <molecule id="Q00438-2"/>
    <property type="nucleotide sequence ID" value="NM_022516.5"/>
</dbReference>
<dbReference type="BMRB" id="Q00438"/>
<dbReference type="SMR" id="Q00438"/>
<dbReference type="FunCoup" id="Q00438">
    <property type="interactions" value="3200"/>
</dbReference>
<dbReference type="IntAct" id="Q00438">
    <property type="interactions" value="1"/>
</dbReference>
<dbReference type="STRING" id="10116.ENSRNOP00000043256"/>
<dbReference type="GlyGen" id="Q00438">
    <property type="glycosylation" value="1 site, 1 O-linked glycan (1 site)"/>
</dbReference>
<dbReference type="iPTMnet" id="Q00438"/>
<dbReference type="PhosphoSitePlus" id="Q00438"/>
<dbReference type="jPOST" id="Q00438"/>
<dbReference type="PaxDb" id="10116-ENSRNOP00000043256"/>
<dbReference type="PeptideAtlas" id="Q00438"/>
<dbReference type="GeneID" id="29497"/>
<dbReference type="KEGG" id="rno:29497"/>
<dbReference type="UCSC" id="RGD:62047">
    <molecule id="Q00438-1"/>
    <property type="organism name" value="rat"/>
</dbReference>
<dbReference type="AGR" id="RGD:62047"/>
<dbReference type="CTD" id="5725"/>
<dbReference type="RGD" id="62047">
    <property type="gene designation" value="Ptbp1"/>
</dbReference>
<dbReference type="VEuPathDB" id="HostDB:ENSRNOG00000010448"/>
<dbReference type="eggNOG" id="KOG1190">
    <property type="taxonomic scope" value="Eukaryota"/>
</dbReference>
<dbReference type="InParanoid" id="Q00438"/>
<dbReference type="TreeFam" id="TF319824"/>
<dbReference type="Reactome" id="R-RNO-6803529">
    <property type="pathway name" value="FGFR2 alternative splicing"/>
</dbReference>
<dbReference type="Reactome" id="R-RNO-72163">
    <property type="pathway name" value="mRNA Splicing - Major Pathway"/>
</dbReference>
<dbReference type="Reactome" id="R-RNO-72203">
    <property type="pathway name" value="Processing of Capped Intron-Containing Pre-mRNA"/>
</dbReference>
<dbReference type="PRO" id="PR:Q00438"/>
<dbReference type="Proteomes" id="UP000002494">
    <property type="component" value="Unplaced"/>
</dbReference>
<dbReference type="Proteomes" id="UP000234681">
    <property type="component" value="Chromosome 7"/>
</dbReference>
<dbReference type="Bgee" id="ENSRNOG00000010448">
    <property type="expression patterns" value="Expressed in thymus and 19 other cell types or tissues"/>
</dbReference>
<dbReference type="GO" id="GO:0044306">
    <property type="term" value="C:neuron projection terminus"/>
    <property type="evidence" value="ECO:0000314"/>
    <property type="project" value="RGD"/>
</dbReference>
<dbReference type="GO" id="GO:0005634">
    <property type="term" value="C:nucleus"/>
    <property type="evidence" value="ECO:0000266"/>
    <property type="project" value="RGD"/>
</dbReference>
<dbReference type="GO" id="GO:0003729">
    <property type="term" value="F:mRNA binding"/>
    <property type="evidence" value="ECO:0000314"/>
    <property type="project" value="RGD"/>
</dbReference>
<dbReference type="GO" id="GO:0036002">
    <property type="term" value="F:pre-mRNA binding"/>
    <property type="evidence" value="ECO:0000266"/>
    <property type="project" value="RGD"/>
</dbReference>
<dbReference type="GO" id="GO:0001069">
    <property type="term" value="F:regulatory region RNA binding"/>
    <property type="evidence" value="ECO:0000314"/>
    <property type="project" value="RGD"/>
</dbReference>
<dbReference type="GO" id="GO:0003723">
    <property type="term" value="F:RNA binding"/>
    <property type="evidence" value="ECO:0000266"/>
    <property type="project" value="RGD"/>
</dbReference>
<dbReference type="GO" id="GO:0043565">
    <property type="term" value="F:sequence-specific DNA binding"/>
    <property type="evidence" value="ECO:0000314"/>
    <property type="project" value="RGD"/>
</dbReference>
<dbReference type="GO" id="GO:0003697">
    <property type="term" value="F:single-stranded DNA binding"/>
    <property type="evidence" value="ECO:0000314"/>
    <property type="project" value="RGD"/>
</dbReference>
<dbReference type="GO" id="GO:0000014">
    <property type="term" value="F:single-stranded DNA endodeoxyribonuclease activity"/>
    <property type="evidence" value="ECO:0000314"/>
    <property type="project" value="RGD"/>
</dbReference>
<dbReference type="GO" id="GO:0070935">
    <property type="term" value="P:3'-UTR-mediated mRNA stabilization"/>
    <property type="evidence" value="ECO:0000314"/>
    <property type="project" value="RGD"/>
</dbReference>
<dbReference type="GO" id="GO:0003231">
    <property type="term" value="P:cardiac ventricle development"/>
    <property type="evidence" value="ECO:0000270"/>
    <property type="project" value="RGD"/>
</dbReference>
<dbReference type="GO" id="GO:0010467">
    <property type="term" value="P:gene expression"/>
    <property type="evidence" value="ECO:0000266"/>
    <property type="project" value="RGD"/>
</dbReference>
<dbReference type="GO" id="GO:0075522">
    <property type="term" value="P:IRES-dependent viral translational initiation"/>
    <property type="evidence" value="ECO:0000266"/>
    <property type="project" value="RGD"/>
</dbReference>
<dbReference type="GO" id="GO:0006397">
    <property type="term" value="P:mRNA processing"/>
    <property type="evidence" value="ECO:0000315"/>
    <property type="project" value="RGD"/>
</dbReference>
<dbReference type="GO" id="GO:0048025">
    <property type="term" value="P:negative regulation of mRNA splicing, via spliceosome"/>
    <property type="evidence" value="ECO:0000250"/>
    <property type="project" value="UniProtKB"/>
</dbReference>
<dbReference type="GO" id="GO:0051148">
    <property type="term" value="P:negative regulation of muscle cell differentiation"/>
    <property type="evidence" value="ECO:0000250"/>
    <property type="project" value="UniProtKB"/>
</dbReference>
<dbReference type="GO" id="GO:0045665">
    <property type="term" value="P:negative regulation of neuron differentiation"/>
    <property type="evidence" value="ECO:0000266"/>
    <property type="project" value="RGD"/>
</dbReference>
<dbReference type="GO" id="GO:0033119">
    <property type="term" value="P:negative regulation of RNA splicing"/>
    <property type="evidence" value="ECO:0000266"/>
    <property type="project" value="RGD"/>
</dbReference>
<dbReference type="GO" id="GO:0022008">
    <property type="term" value="P:neurogenesis"/>
    <property type="evidence" value="ECO:0000266"/>
    <property type="project" value="RGD"/>
</dbReference>
<dbReference type="GO" id="GO:0000956">
    <property type="term" value="P:nuclear-transcribed mRNA catabolic process"/>
    <property type="evidence" value="ECO:0000315"/>
    <property type="project" value="RGD"/>
</dbReference>
<dbReference type="GO" id="GO:0070886">
    <property type="term" value="P:positive regulation of calcineurin-NFAT signaling cascade"/>
    <property type="evidence" value="ECO:0000266"/>
    <property type="project" value="RGD"/>
</dbReference>
<dbReference type="GO" id="GO:0032024">
    <property type="term" value="P:positive regulation of insulin secretion"/>
    <property type="evidence" value="ECO:0000315"/>
    <property type="project" value="RGD"/>
</dbReference>
<dbReference type="GO" id="GO:0010976">
    <property type="term" value="P:positive regulation of neuron projection development"/>
    <property type="evidence" value="ECO:0000315"/>
    <property type="project" value="RGD"/>
</dbReference>
<dbReference type="GO" id="GO:1904411">
    <property type="term" value="P:positive regulation of secretory granule organization"/>
    <property type="evidence" value="ECO:0000315"/>
    <property type="project" value="RGD"/>
</dbReference>
<dbReference type="GO" id="GO:0045944">
    <property type="term" value="P:positive regulation of transcription by RNA polymerase II"/>
    <property type="evidence" value="ECO:0000266"/>
    <property type="project" value="RGD"/>
</dbReference>
<dbReference type="GO" id="GO:0045727">
    <property type="term" value="P:positive regulation of translation"/>
    <property type="evidence" value="ECO:0000315"/>
    <property type="project" value="RGD"/>
</dbReference>
<dbReference type="GO" id="GO:0000381">
    <property type="term" value="P:regulation of alternative mRNA splicing, via spliceosome"/>
    <property type="evidence" value="ECO:0000250"/>
    <property type="project" value="UniProtKB"/>
</dbReference>
<dbReference type="GO" id="GO:0045595">
    <property type="term" value="P:regulation of cell differentiation"/>
    <property type="evidence" value="ECO:0000318"/>
    <property type="project" value="GO_Central"/>
</dbReference>
<dbReference type="GO" id="GO:0043484">
    <property type="term" value="P:regulation of RNA splicing"/>
    <property type="evidence" value="ECO:0000318"/>
    <property type="project" value="GO_Central"/>
</dbReference>
<dbReference type="GO" id="GO:0008380">
    <property type="term" value="P:RNA splicing"/>
    <property type="evidence" value="ECO:0007669"/>
    <property type="project" value="UniProtKB-KW"/>
</dbReference>
<dbReference type="CDD" id="cd12777">
    <property type="entry name" value="RRM1_PTBP1"/>
    <property type="match status" value="1"/>
</dbReference>
<dbReference type="CDD" id="cd12693">
    <property type="entry name" value="RRM2_PTBP1_like"/>
    <property type="match status" value="1"/>
</dbReference>
<dbReference type="CDD" id="cd12695">
    <property type="entry name" value="RRM3_PTBP1"/>
    <property type="match status" value="1"/>
</dbReference>
<dbReference type="FunFam" id="3.30.70.330:FF:000036">
    <property type="entry name" value="polypyrimidine tract-binding protein 1 isoform X2"/>
    <property type="match status" value="1"/>
</dbReference>
<dbReference type="FunFam" id="3.30.70.330:FF:000162">
    <property type="entry name" value="polypyrimidine tract-binding protein 1 isoform X2"/>
    <property type="match status" value="1"/>
</dbReference>
<dbReference type="FunFam" id="3.30.70.330:FF:000018">
    <property type="entry name" value="Polypyrimidine tract-binding protein 2 isoform 1"/>
    <property type="match status" value="1"/>
</dbReference>
<dbReference type="FunFam" id="3.30.70.330:FF:000032">
    <property type="entry name" value="Polypyrimidine tract-binding protein 2 isoform 1"/>
    <property type="match status" value="1"/>
</dbReference>
<dbReference type="Gene3D" id="3.30.70.330">
    <property type="match status" value="4"/>
</dbReference>
<dbReference type="InterPro" id="IPR006536">
    <property type="entry name" value="HnRNP-L/PTB"/>
</dbReference>
<dbReference type="InterPro" id="IPR012677">
    <property type="entry name" value="Nucleotide-bd_a/b_plait_sf"/>
</dbReference>
<dbReference type="InterPro" id="IPR021790">
    <property type="entry name" value="PTBP1-like_RRM2"/>
</dbReference>
<dbReference type="InterPro" id="IPR035000">
    <property type="entry name" value="PTBP1_RRM1"/>
</dbReference>
<dbReference type="InterPro" id="IPR035001">
    <property type="entry name" value="PTBP1_RRM3"/>
</dbReference>
<dbReference type="InterPro" id="IPR035979">
    <property type="entry name" value="RBD_domain_sf"/>
</dbReference>
<dbReference type="InterPro" id="IPR000504">
    <property type="entry name" value="RRM_dom"/>
</dbReference>
<dbReference type="NCBIfam" id="TIGR01649">
    <property type="entry name" value="hnRNP-L_PTB"/>
    <property type="match status" value="1"/>
</dbReference>
<dbReference type="PANTHER" id="PTHR15592">
    <property type="entry name" value="MATRIN 3/NUCLEAR PROTEIN 220-RELATED"/>
    <property type="match status" value="1"/>
</dbReference>
<dbReference type="Pfam" id="PF00076">
    <property type="entry name" value="RRM_1"/>
    <property type="match status" value="1"/>
</dbReference>
<dbReference type="Pfam" id="PF13893">
    <property type="entry name" value="RRM_5"/>
    <property type="match status" value="2"/>
</dbReference>
<dbReference type="Pfam" id="PF11835">
    <property type="entry name" value="RRM_8"/>
    <property type="match status" value="1"/>
</dbReference>
<dbReference type="SMART" id="SM00360">
    <property type="entry name" value="RRM"/>
    <property type="match status" value="4"/>
</dbReference>
<dbReference type="SUPFAM" id="SSF54928">
    <property type="entry name" value="RNA-binding domain, RBD"/>
    <property type="match status" value="4"/>
</dbReference>
<dbReference type="PROSITE" id="PS50102">
    <property type="entry name" value="RRM"/>
    <property type="match status" value="4"/>
</dbReference>
<organism>
    <name type="scientific">Rattus norvegicus</name>
    <name type="common">Rat</name>
    <dbReference type="NCBI Taxonomy" id="10116"/>
    <lineage>
        <taxon>Eukaryota</taxon>
        <taxon>Metazoa</taxon>
        <taxon>Chordata</taxon>
        <taxon>Craniata</taxon>
        <taxon>Vertebrata</taxon>
        <taxon>Euteleostomi</taxon>
        <taxon>Mammalia</taxon>
        <taxon>Eutheria</taxon>
        <taxon>Euarchontoglires</taxon>
        <taxon>Glires</taxon>
        <taxon>Rodentia</taxon>
        <taxon>Myomorpha</taxon>
        <taxon>Muroidea</taxon>
        <taxon>Muridae</taxon>
        <taxon>Murinae</taxon>
        <taxon>Rattus</taxon>
    </lineage>
</organism>
<keyword id="KW-0007">Acetylation</keyword>
<keyword id="KW-0010">Activator</keyword>
<keyword id="KW-0025">Alternative splicing</keyword>
<keyword id="KW-0903">Direct protein sequencing</keyword>
<keyword id="KW-1017">Isopeptide bond</keyword>
<keyword id="KW-0507">mRNA processing</keyword>
<keyword id="KW-0508">mRNA splicing</keyword>
<keyword id="KW-0539">Nucleus</keyword>
<keyword id="KW-0597">Phosphoprotein</keyword>
<keyword id="KW-1185">Reference proteome</keyword>
<keyword id="KW-0677">Repeat</keyword>
<keyword id="KW-0678">Repressor</keyword>
<keyword id="KW-0694">RNA-binding</keyword>
<keyword id="KW-0832">Ubl conjugation</keyword>
<name>PTBP1_RAT</name>
<reference key="1">
    <citation type="journal article" date="1991" name="Nucleic Acids Res.">
        <title>Cloning and sequencing of PYBP, a pyrimidine-rich specific single strand DNA-binding protein.</title>
        <authorList>
            <person name="Brunel F."/>
            <person name="Alzari P.M."/>
            <person name="Ferrara P."/>
            <person name="Zakin M.M."/>
        </authorList>
    </citation>
    <scope>NUCLEOTIDE SEQUENCE [MRNA] (ISOFORMS PYBP1 AND PYBP2)</scope>
    <scope>PROTEIN SEQUENCE OF 185-205; 349-366 AND 518-550</scope>
    <source>
        <tissue>Hepatoma</tissue>
    </source>
</reference>
<reference key="2">
    <citation type="submission" date="1993-08" db="EMBL/GenBank/DDBJ databases">
        <authorList>
            <person name="Sengupta P."/>
        </authorList>
    </citation>
    <scope>NUCLEOTIDE SEQUENCE [MRNA] (ISOFORM PYBP2)</scope>
</reference>
<reference evidence="8" key="3">
    <citation type="submission" date="2005-07" db="EMBL/GenBank/DDBJ databases">
        <authorList>
            <person name="Mural R.J."/>
            <person name="Adams M.D."/>
            <person name="Myers E.W."/>
            <person name="Smith H.O."/>
            <person name="Venter J.C."/>
        </authorList>
    </citation>
    <scope>NUCLEOTIDE SEQUENCE [LARGE SCALE GENOMIC DNA]</scope>
</reference>
<reference evidence="7" key="4">
    <citation type="journal article" date="2004" name="Genome Res.">
        <title>The status, quality, and expansion of the NIH full-length cDNA project: the Mammalian Gene Collection (MGC).</title>
        <authorList>
            <consortium name="The MGC Project Team"/>
        </authorList>
    </citation>
    <scope>NUCLEOTIDE SEQUENCE [LARGE SCALE MRNA] (ISOFORM PYBP2)</scope>
    <source>
        <tissue evidence="7">Prostate</tissue>
    </source>
</reference>
<reference key="5">
    <citation type="submission" date="2006-08" db="UniProtKB">
        <authorList>
            <person name="Bienvenut W.V."/>
            <person name="von Kriegsheim A.F."/>
            <person name="Kolch W."/>
        </authorList>
    </citation>
    <scope>PROTEIN SEQUENCE OF 1-13; 84-91; 122-133; 436-453 AND 497-507</scope>
    <scope>ACETYLATION AT MET-1</scope>
    <scope>IDENTIFICATION BY MASS SPECTROMETRY</scope>
    <source>
        <tissue>Pheochromocytoma</tissue>
    </source>
</reference>
<accession>Q00438</accession>
<accession>F1LM18</accession>
<accession>Q63568</accession>
<accession>Q6P736</accession>
<protein>
    <recommendedName>
        <fullName>Polypyrimidine tract-binding protein 1</fullName>
        <shortName>PTB</shortName>
    </recommendedName>
    <alternativeName>
        <fullName>Heterogeneous nuclear ribonucleoprotein I</fullName>
        <shortName>hnRNP I</shortName>
    </alternativeName>
    <alternativeName>
        <fullName>Pyrimidine-binding protein</fullName>
        <shortName>PYBP</shortName>
    </alternativeName>
</protein>
<evidence type="ECO:0000250" key="1"/>
<evidence type="ECO:0000250" key="2">
    <source>
        <dbReference type="UniProtKB" id="P26599"/>
    </source>
</evidence>
<evidence type="ECO:0000255" key="3">
    <source>
        <dbReference type="PROSITE-ProRule" id="PRU00176"/>
    </source>
</evidence>
<evidence type="ECO:0000256" key="4">
    <source>
        <dbReference type="SAM" id="MobiDB-lite"/>
    </source>
</evidence>
<evidence type="ECO:0000269" key="5">
    <source ref="5"/>
</evidence>
<evidence type="ECO:0000305" key="6"/>
<evidence type="ECO:0000312" key="7">
    <source>
        <dbReference type="EMBL" id="AAH61858.1"/>
    </source>
</evidence>
<evidence type="ECO:0000312" key="8">
    <source>
        <dbReference type="EMBL" id="EDL89384.1"/>
    </source>
</evidence>
<proteinExistence type="evidence at protein level"/>
<sequence>MDGIVPDIAVGTKRGSDELFSTCVSNGPFIMSSSASAANGNDSKKFKGDNRSTGVPSRVIHVRKLPSDVTEGEVISLGLPFGKVTNLLMLKGKNQAFIEMSTEEAANTMVNYYTSVAPVLRGQPIYIQFSNHKELKTDSSPNQARAQAALQAVNSVQSGNLALAASAAAVDAGMAMAGQSPVLRIIVENLFYPVTLDVLHQIFSKFGTVLKIITFTKNNQFQALLQYADPVSAQHAKLSLDGQNIYNACCTLRIDFSKLTSLNVKYNNDKSRDYTRPDLPSGDSQPSLDQTMAAAFGAPGIMSASPYAGAGFPPTFAIPQAAGLSVPNVHGALAPLAIPSAAAAAAAAGRIAIPGLAGAGNSVLLVSNLNPERVTPQSLFILFGVYGDVQRVKILFNKKENALVQMADGSQAQLAMSHLNGHKLHGKSVRITLSKHQSVQLPREGQEDQGLTKDYGSSPLHRFKKPGSKNFQNIFPPSATLHLSNIPPSVSEDDLKSLFSSNGGVVKGFKFFQKDRKMALIQMGSVEEAVQALIELHNHDLGENHHLRVSFSKSTI</sequence>
<comment type="function">
    <text evidence="2">Plays a role in pre-mRNA splicing and in the regulation of alternative splicing events. Activates exon skipping of its own pre-mRNA during muscle cell differentiation. Binds to the polypyrimidine tract of introns. May promote RNA looping when bound to two separate polypyrimidine tracts in the same pre-mRNA. May promote the binding of U2 snRNP to pre-mRNA. Cooperates with RAVER1 to modulate switching between mutually exclusive exons during maturation of the TPM1 pre-mRNA. Represses the splicing of MAPT/Tau exon 10. Binds to polypyrimidine-rich controlling element (PCE) of CFTR and promotes exon skipping of CFTR exon 9, thereby antagonizing TIA1 and its role in exon inclusion of CFTR exon 9. Plays a role in the splicing of pyruvate kinase PKM by binding repressively to a polypyrimidine tract flanking PKM exon 9, inhibiting exon 9 inclusion and resulting in exon 10 inclusion and production of the PKM M2 isoform.</text>
</comment>
<comment type="subunit">
    <text evidence="1">Monomer. Part of a ternary complex containing KHSRP, PTBP1, PTBP2 and HNRPH1. Interacts with RAVER1 and SFPQ (By similarity).</text>
</comment>
<comment type="subcellular location">
    <subcellularLocation>
        <location>Nucleus</location>
    </subcellularLocation>
</comment>
<comment type="alternative products">
    <event type="alternative splicing"/>
    <isoform>
        <id>Q00438-1</id>
        <name>PYBP2</name>
        <sequence type="displayed"/>
    </isoform>
    <isoform>
        <id>Q00438-2</id>
        <name>PYBP1</name>
        <sequence type="described" ref="VSP_005803"/>
    </isoform>
    <text>Additional isoforms seem to exist.</text>
</comment>
<comment type="sequence caution" evidence="6">
    <conflict type="frameshift">
        <sequence resource="EMBL-CDS" id="CAA43203"/>
    </conflict>
</comment>
<feature type="chain" id="PRO_0000081740" description="Polypyrimidine tract-binding protein 1">
    <location>
        <begin position="1"/>
        <end position="556"/>
    </location>
</feature>
<feature type="domain" description="RRM 1" evidence="3">
    <location>
        <begin position="58"/>
        <end position="142"/>
    </location>
</feature>
<feature type="domain" description="RRM 2" evidence="3">
    <location>
        <begin position="183"/>
        <end position="259"/>
    </location>
</feature>
<feature type="domain" description="RRM 3" evidence="3">
    <location>
        <begin position="362"/>
        <end position="436"/>
    </location>
</feature>
<feature type="domain" description="RRM 4" evidence="3">
    <location>
        <begin position="479"/>
        <end position="554"/>
    </location>
</feature>
<feature type="region of interest" description="Disordered" evidence="4">
    <location>
        <begin position="35"/>
        <end position="54"/>
    </location>
</feature>
<feature type="region of interest" description="Disordered" evidence="4">
    <location>
        <begin position="436"/>
        <end position="458"/>
    </location>
</feature>
<feature type="modified residue" description="N-acetylmethionine" evidence="5">
    <location>
        <position position="1"/>
    </location>
</feature>
<feature type="modified residue" description="Phosphoserine" evidence="2">
    <location>
        <position position="16"/>
    </location>
</feature>
<feature type="modified residue" description="Phosphotyrosine" evidence="2">
    <location>
        <position position="126"/>
    </location>
</feature>
<feature type="modified residue" description="Phosphothreonine" evidence="2">
    <location>
        <position position="137"/>
    </location>
</feature>
<feature type="modified residue" description="Phosphoserine" evidence="2">
    <location>
        <position position="140"/>
    </location>
</feature>
<feature type="modified residue" description="Phosphoserine" evidence="2">
    <location>
        <position position="458"/>
    </location>
</feature>
<feature type="cross-link" description="Glycyl lysine isopeptide (Lys-Gly) (interchain with G-Cter in SUMO2)" evidence="2">
    <location>
        <position position="64"/>
    </location>
</feature>
<feature type="cross-link" description="Glycyl lysine isopeptide (Lys-Gly) (interchain with G-Cter in SUMO2)" evidence="2">
    <location>
        <position position="217"/>
    </location>
</feature>
<feature type="splice variant" id="VSP_005803" description="In isoform PYBP1." evidence="6">
    <location>
        <begin position="297"/>
        <end position="322"/>
    </location>
</feature>
<feature type="sequence conflict" description="In Ref. 2; CAA52653." evidence="6" ref="2">
    <original>S</original>
    <variation>T</variation>
    <location>
        <position position="57"/>
    </location>
</feature>
<feature type="sequence conflict" description="In Ref. 2; CAA52653." evidence="6" ref="2">
    <original>A</original>
    <variation>R</variation>
    <location>
        <position position="164"/>
    </location>
</feature>
<feature type="sequence conflict" description="In Ref. 1; CAA43202 and 2; CAA52653." evidence="6" ref="1 2">
    <original>Q</original>
    <variation>E</variation>
    <location>
        <position position="405"/>
    </location>
</feature>
<feature type="sequence conflict" description="In Ref. 1; AA sequence." evidence="6" ref="1">
    <original>ENHHLRVS</original>
    <variation>LGDNHHKR</variation>
    <location>
        <begin position="543"/>
        <end position="550"/>
    </location>
</feature>